<evidence type="ECO:0000255" key="1"/>
<evidence type="ECO:0000305" key="2"/>
<dbReference type="EMBL" id="JF411744">
    <property type="protein sequence ID" value="AAC96618.1"/>
    <property type="molecule type" value="Genomic_DNA"/>
</dbReference>
<dbReference type="EMBL" id="AY338212">
    <property type="protein sequence ID" value="AAQ16129.1"/>
    <property type="molecule type" value="Genomic_DNA"/>
</dbReference>
<dbReference type="PIR" id="T17742">
    <property type="entry name" value="T17742"/>
</dbReference>
<dbReference type="RefSeq" id="NP_048599.1">
    <property type="nucleotide sequence ID" value="NC_000852.5"/>
</dbReference>
<dbReference type="SMR" id="Q84568"/>
<dbReference type="TCDB" id="1.A.1.12.1">
    <property type="family name" value="the voltage-gated ion channel (vic) superfamily"/>
</dbReference>
<dbReference type="GlyCosmos" id="Q84568">
    <property type="glycosylation" value="1 site, No reported glycans"/>
</dbReference>
<dbReference type="GeneID" id="918298"/>
<dbReference type="KEGG" id="vg:918298"/>
<dbReference type="OrthoDB" id="20616at10239"/>
<dbReference type="Proteomes" id="UP000000862">
    <property type="component" value="Genome"/>
</dbReference>
<dbReference type="GO" id="GO:0033644">
    <property type="term" value="C:host cell membrane"/>
    <property type="evidence" value="ECO:0007669"/>
    <property type="project" value="UniProtKB-KW"/>
</dbReference>
<dbReference type="GO" id="GO:0016020">
    <property type="term" value="C:membrane"/>
    <property type="evidence" value="ECO:0007669"/>
    <property type="project" value="UniProtKB-SubCell"/>
</dbReference>
<dbReference type="GO" id="GO:0015267">
    <property type="term" value="F:channel activity"/>
    <property type="evidence" value="ECO:0007669"/>
    <property type="project" value="UniProtKB-KW"/>
</dbReference>
<dbReference type="GO" id="GO:0034220">
    <property type="term" value="P:monoatomic ion transmembrane transport"/>
    <property type="evidence" value="ECO:0007669"/>
    <property type="project" value="UniProtKB-KW"/>
</dbReference>
<dbReference type="GO" id="GO:0006813">
    <property type="term" value="P:potassium ion transport"/>
    <property type="evidence" value="ECO:0000314"/>
    <property type="project" value="CACAO"/>
</dbReference>
<dbReference type="FunFam" id="1.10.287.70:FF:000272">
    <property type="entry name" value="Potassium channel protein kcv"/>
    <property type="match status" value="1"/>
</dbReference>
<dbReference type="Gene3D" id="1.10.287.70">
    <property type="match status" value="1"/>
</dbReference>
<dbReference type="InterPro" id="IPR013099">
    <property type="entry name" value="K_chnl_dom"/>
</dbReference>
<dbReference type="Pfam" id="PF07885">
    <property type="entry name" value="Ion_trans_2"/>
    <property type="match status" value="1"/>
</dbReference>
<dbReference type="SUPFAM" id="SSF81324">
    <property type="entry name" value="Voltage-gated potassium channels"/>
    <property type="match status" value="1"/>
</dbReference>
<organism>
    <name type="scientific">Paramecium bursaria Chlorella virus 1</name>
    <name type="common">PBCV-1</name>
    <dbReference type="NCBI Taxonomy" id="10506"/>
    <lineage>
        <taxon>Viruses</taxon>
        <taxon>Varidnaviria</taxon>
        <taxon>Bamfordvirae</taxon>
        <taxon>Nucleocytoviricota</taxon>
        <taxon>Megaviricetes</taxon>
        <taxon>Algavirales</taxon>
        <taxon>Phycodnaviridae</taxon>
        <taxon>Chlorovirus</taxon>
    </lineage>
</organism>
<accession>Q84568</accession>
<feature type="chain" id="PRO_0000408874" description="Potassium channel protein kcv">
    <location>
        <begin position="1"/>
        <end position="94"/>
    </location>
</feature>
<feature type="transmembrane region" description="Helical" evidence="1">
    <location>
        <begin position="14"/>
        <end position="34"/>
    </location>
</feature>
<feature type="transmembrane region" description="Helical" evidence="1">
    <location>
        <begin position="74"/>
        <end position="94"/>
    </location>
</feature>
<feature type="glycosylation site" description="N-linked (GlcNAc...) asparagine; by host" evidence="1">
    <location>
        <position position="38"/>
    </location>
</feature>
<keyword id="KW-0325">Glycoprotein</keyword>
<keyword id="KW-0407">Ion channel</keyword>
<keyword id="KW-0406">Ion transport</keyword>
<keyword id="KW-0472">Membrane</keyword>
<keyword id="KW-1185">Reference proteome</keyword>
<keyword id="KW-0812">Transmembrane</keyword>
<keyword id="KW-1133">Transmembrane helix</keyword>
<keyword id="KW-0813">Transport</keyword>
<keyword id="KW-1182">Viral ion channel</keyword>
<gene>
    <name type="primary">A250R</name>
</gene>
<protein>
    <recommendedName>
        <fullName>Potassium channel protein kcv</fullName>
    </recommendedName>
</protein>
<name>KCV_PBCV1</name>
<sequence>MLVFSKFLTRTEPFMIHLFILAMFVMIYKFFPGGFENNFSVANPDKKASWIDCIYFGVTTHSTVGFGDILPKTTGAKLCTIAHIVTVFFIVLTL</sequence>
<reference key="1">
    <citation type="journal article" date="1996" name="Virology">
        <title>Analysis of 94 kb of the chlorella virus PBCV-1 330-kb genome: map positions 88 to 182.</title>
        <authorList>
            <person name="Lu Z."/>
            <person name="Li Y."/>
            <person name="Que Q."/>
            <person name="Kutish G.F."/>
            <person name="Rock D.L."/>
            <person name="van Etten J.L."/>
        </authorList>
    </citation>
    <scope>NUCLEOTIDE SEQUENCE [GENOMIC DNA]</scope>
</reference>
<reference key="2">
    <citation type="journal article" date="1999" name="Virology">
        <title>Chlorella virus PBCV-1 encodes a functional homospermidine synthase.</title>
        <authorList>
            <person name="Kaiser A."/>
            <person name="Vollmert M."/>
            <person name="Tholl D."/>
            <person name="Graves M.V."/>
            <person name="Gurnon J.R."/>
            <person name="Xing W."/>
            <person name="Lisec A.D."/>
            <person name="Nickerson K.W."/>
            <person name="Van Etten J.L."/>
        </authorList>
    </citation>
    <scope>NUCLEOTIDE SEQUENCE [GENOMIC DNA]</scope>
</reference>
<reference key="3">
    <citation type="journal article" date="2000" name="Virology">
        <title>Characterization of a beta-1,3-glucanase encoded by chlorella virus PBCV-1.</title>
        <authorList>
            <person name="Sun L."/>
            <person name="Gurnon J.R."/>
            <person name="Adams B.J."/>
            <person name="Graves M.V."/>
            <person name="Van Etten J.L."/>
        </authorList>
    </citation>
    <scope>NUCLEOTIDE SEQUENCE [GENOMIC DNA]</scope>
</reference>
<reference key="4">
    <citation type="submission" date="2007-04" db="EMBL/GenBank/DDBJ databases">
        <authorList>
            <person name="Gurnon J.R."/>
        </authorList>
    </citation>
    <scope>NUCLEOTIDE SEQUENCE [GENOMIC DNA]</scope>
</reference>
<reference key="5">
    <citation type="journal article" date="2004" name="Proc. Natl. Acad. Sci. U.S.A.">
        <title>Small potassium ion channel proteins encoded by chlorella viruses.</title>
        <authorList>
            <person name="Kang M."/>
            <person name="Moroni A."/>
            <person name="Gazzarrini S."/>
            <person name="DiFrancesco D."/>
            <person name="Thiel G."/>
            <person name="Severino M."/>
            <person name="Van Etten J.L."/>
        </authorList>
    </citation>
    <scope>NUCLEOTIDE SEQUENCE [GENOMIC DNA]</scope>
</reference>
<reference key="6">
    <citation type="journal article" date="2000" name="Science">
        <title>A potassium channel protein encoded by chlorella virus PBCV-1.</title>
        <authorList>
            <person name="Plugge B."/>
            <person name="Gazzarrini S."/>
            <person name="Nelson M."/>
            <person name="Cerana R."/>
            <person name="Van Etten J.L."/>
            <person name="Derst C."/>
            <person name="DiFrancesco D."/>
            <person name="Moroni A."/>
            <person name="Thiel G."/>
        </authorList>
    </citation>
    <scope>FUNCTION</scope>
</reference>
<reference key="7">
    <citation type="journal article" date="2009" name="J. Gen. Virol.">
        <title>Chlorella viruses prevent multiple infections by depolarizing the host membrane.</title>
        <authorList>
            <person name="Greiner T."/>
            <person name="Frohns F."/>
            <person name="Kang M."/>
            <person name="Van Etten J.L."/>
            <person name="Kasmann A."/>
            <person name="Moroni A."/>
            <person name="Hertel B."/>
            <person name="Thiel G."/>
        </authorList>
    </citation>
    <scope>FUNCTION</scope>
</reference>
<proteinExistence type="inferred from homology"/>
<comment type="function">
    <text evidence="2">Potassium-selective channel essential in the virus replication cycle. May be involved in preventing multiple infections (Potential).</text>
</comment>
<comment type="subcellular location">
    <subcellularLocation>
        <location evidence="2">Membrane</location>
        <topology evidence="2">Multi-pass membrane protein</topology>
    </subcellularLocation>
</comment>
<comment type="similarity">
    <text evidence="2">Belongs to the two pore domain potassium channel (TC 1.A.1.12) family.</text>
</comment>
<organismHost>
    <name type="scientific">Chlorella</name>
    <dbReference type="NCBI Taxonomy" id="3071"/>
</organismHost>